<sequence>MEITDVRIRKIDSEGKMKAVVSVTFDNEFVVHDIKVIESQNGLFIAMPSRKAPDGEFRDIAHPINAETRSKIQTAILDKYESICAGSTETEGNN</sequence>
<accession>A3DIP8</accession>
<keyword id="KW-0131">Cell cycle</keyword>
<keyword id="KW-0132">Cell division</keyword>
<keyword id="KW-1185">Reference proteome</keyword>
<keyword id="KW-0717">Septation</keyword>
<feature type="chain" id="PRO_1000062432" description="Putative septation protein SpoVG">
    <location>
        <begin position="1"/>
        <end position="94"/>
    </location>
</feature>
<evidence type="ECO:0000255" key="1">
    <source>
        <dbReference type="HAMAP-Rule" id="MF_00819"/>
    </source>
</evidence>
<proteinExistence type="inferred from homology"/>
<name>SP5G_ACET2</name>
<reference key="1">
    <citation type="submission" date="2007-02" db="EMBL/GenBank/DDBJ databases">
        <title>Complete sequence of Clostridium thermocellum ATCC 27405.</title>
        <authorList>
            <consortium name="US DOE Joint Genome Institute"/>
            <person name="Copeland A."/>
            <person name="Lucas S."/>
            <person name="Lapidus A."/>
            <person name="Barry K."/>
            <person name="Detter J.C."/>
            <person name="Glavina del Rio T."/>
            <person name="Hammon N."/>
            <person name="Israni S."/>
            <person name="Dalin E."/>
            <person name="Tice H."/>
            <person name="Pitluck S."/>
            <person name="Chertkov O."/>
            <person name="Brettin T."/>
            <person name="Bruce D."/>
            <person name="Han C."/>
            <person name="Tapia R."/>
            <person name="Gilna P."/>
            <person name="Schmutz J."/>
            <person name="Larimer F."/>
            <person name="Land M."/>
            <person name="Hauser L."/>
            <person name="Kyrpides N."/>
            <person name="Mikhailova N."/>
            <person name="Wu J.H.D."/>
            <person name="Newcomb M."/>
            <person name="Richardson P."/>
        </authorList>
    </citation>
    <scope>NUCLEOTIDE SEQUENCE [LARGE SCALE GENOMIC DNA]</scope>
    <source>
        <strain>ATCC 27405 / DSM 1237 / JCM 9322 / NBRC 103400 / NCIMB 10682 / NRRL B-4536 / VPI 7372</strain>
    </source>
</reference>
<gene>
    <name evidence="1" type="primary">spoVG</name>
    <name type="ordered locus">Cthe_2628</name>
</gene>
<comment type="function">
    <text evidence="1">Could be involved in septation.</text>
</comment>
<comment type="similarity">
    <text evidence="1">Belongs to the SpoVG family.</text>
</comment>
<dbReference type="EMBL" id="CP000568">
    <property type="protein sequence ID" value="ABN53827.1"/>
    <property type="molecule type" value="Genomic_DNA"/>
</dbReference>
<dbReference type="RefSeq" id="WP_003512917.1">
    <property type="nucleotide sequence ID" value="NC_009012.1"/>
</dbReference>
<dbReference type="SMR" id="A3DIP8"/>
<dbReference type="STRING" id="203119.Cthe_2628"/>
<dbReference type="GeneID" id="35804172"/>
<dbReference type="KEGG" id="cth:Cthe_2628"/>
<dbReference type="eggNOG" id="COG2088">
    <property type="taxonomic scope" value="Bacteria"/>
</dbReference>
<dbReference type="HOGENOM" id="CLU_103669_2_1_9"/>
<dbReference type="OrthoDB" id="9796286at2"/>
<dbReference type="Proteomes" id="UP000002145">
    <property type="component" value="Chromosome"/>
</dbReference>
<dbReference type="GO" id="GO:0000917">
    <property type="term" value="P:division septum assembly"/>
    <property type="evidence" value="ECO:0007669"/>
    <property type="project" value="UniProtKB-KW"/>
</dbReference>
<dbReference type="GO" id="GO:0030435">
    <property type="term" value="P:sporulation resulting in formation of a cellular spore"/>
    <property type="evidence" value="ECO:0007669"/>
    <property type="project" value="InterPro"/>
</dbReference>
<dbReference type="Gene3D" id="3.30.1120.40">
    <property type="entry name" value="Stage V sporulation protein G"/>
    <property type="match status" value="1"/>
</dbReference>
<dbReference type="HAMAP" id="MF_00819">
    <property type="entry name" value="SpoVG"/>
    <property type="match status" value="1"/>
</dbReference>
<dbReference type="InterPro" id="IPR007170">
    <property type="entry name" value="SpoVG"/>
</dbReference>
<dbReference type="InterPro" id="IPR036751">
    <property type="entry name" value="SpoVG_sf"/>
</dbReference>
<dbReference type="NCBIfam" id="NF009749">
    <property type="entry name" value="PRK13259.1"/>
    <property type="match status" value="1"/>
</dbReference>
<dbReference type="PANTHER" id="PTHR38429">
    <property type="entry name" value="SEPTATION PROTEIN SPOVG-RELATED"/>
    <property type="match status" value="1"/>
</dbReference>
<dbReference type="PANTHER" id="PTHR38429:SF1">
    <property type="entry name" value="SEPTATION PROTEIN SPOVG-RELATED"/>
    <property type="match status" value="1"/>
</dbReference>
<dbReference type="Pfam" id="PF04026">
    <property type="entry name" value="SpoVG"/>
    <property type="match status" value="1"/>
</dbReference>
<dbReference type="SUPFAM" id="SSF160537">
    <property type="entry name" value="SpoVG-like"/>
    <property type="match status" value="1"/>
</dbReference>
<protein>
    <recommendedName>
        <fullName evidence="1">Putative septation protein SpoVG</fullName>
    </recommendedName>
</protein>
<organism>
    <name type="scientific">Acetivibrio thermocellus (strain ATCC 27405 / DSM 1237 / JCM 9322 / NBRC 103400 / NCIMB 10682 / NRRL B-4536 / VPI 7372)</name>
    <name type="common">Clostridium thermocellum</name>
    <dbReference type="NCBI Taxonomy" id="203119"/>
    <lineage>
        <taxon>Bacteria</taxon>
        <taxon>Bacillati</taxon>
        <taxon>Bacillota</taxon>
        <taxon>Clostridia</taxon>
        <taxon>Eubacteriales</taxon>
        <taxon>Oscillospiraceae</taxon>
        <taxon>Acetivibrio</taxon>
    </lineage>
</organism>